<gene>
    <name evidence="2" type="primary">mutM</name>
    <name evidence="2" type="synonym">fpg</name>
    <name type="ordered locus">Acid_6700</name>
</gene>
<dbReference type="EC" id="3.2.2.23" evidence="2"/>
<dbReference type="EC" id="4.2.99.18" evidence="2"/>
<dbReference type="EMBL" id="CP000473">
    <property type="protein sequence ID" value="ABJ87621.1"/>
    <property type="molecule type" value="Genomic_DNA"/>
</dbReference>
<dbReference type="SMR" id="Q01RU9"/>
<dbReference type="FunCoup" id="Q01RU9">
    <property type="interactions" value="492"/>
</dbReference>
<dbReference type="STRING" id="234267.Acid_6700"/>
<dbReference type="KEGG" id="sus:Acid_6700"/>
<dbReference type="eggNOG" id="COG0266">
    <property type="taxonomic scope" value="Bacteria"/>
</dbReference>
<dbReference type="HOGENOM" id="CLU_038423_1_3_0"/>
<dbReference type="InParanoid" id="Q01RU9"/>
<dbReference type="OrthoDB" id="9800855at2"/>
<dbReference type="GO" id="GO:0034039">
    <property type="term" value="F:8-oxo-7,8-dihydroguanine DNA N-glycosylase activity"/>
    <property type="evidence" value="ECO:0007669"/>
    <property type="project" value="TreeGrafter"/>
</dbReference>
<dbReference type="GO" id="GO:0140078">
    <property type="term" value="F:class I DNA-(apurinic or apyrimidinic site) endonuclease activity"/>
    <property type="evidence" value="ECO:0007669"/>
    <property type="project" value="UniProtKB-EC"/>
</dbReference>
<dbReference type="GO" id="GO:0003684">
    <property type="term" value="F:damaged DNA binding"/>
    <property type="evidence" value="ECO:0007669"/>
    <property type="project" value="InterPro"/>
</dbReference>
<dbReference type="GO" id="GO:0008270">
    <property type="term" value="F:zinc ion binding"/>
    <property type="evidence" value="ECO:0007669"/>
    <property type="project" value="UniProtKB-UniRule"/>
</dbReference>
<dbReference type="GO" id="GO:0006284">
    <property type="term" value="P:base-excision repair"/>
    <property type="evidence" value="ECO:0007669"/>
    <property type="project" value="InterPro"/>
</dbReference>
<dbReference type="CDD" id="cd08966">
    <property type="entry name" value="EcFpg-like_N"/>
    <property type="match status" value="1"/>
</dbReference>
<dbReference type="FunFam" id="1.10.8.50:FF:000003">
    <property type="entry name" value="Formamidopyrimidine-DNA glycosylase"/>
    <property type="match status" value="1"/>
</dbReference>
<dbReference type="Gene3D" id="1.10.8.50">
    <property type="match status" value="1"/>
</dbReference>
<dbReference type="Gene3D" id="3.20.190.10">
    <property type="entry name" value="MutM-like, N-terminal"/>
    <property type="match status" value="1"/>
</dbReference>
<dbReference type="HAMAP" id="MF_00103">
    <property type="entry name" value="Fapy_DNA_glycosyl"/>
    <property type="match status" value="1"/>
</dbReference>
<dbReference type="InterPro" id="IPR015886">
    <property type="entry name" value="DNA_glyclase/AP_lyase_DNA-bd"/>
</dbReference>
<dbReference type="InterPro" id="IPR015887">
    <property type="entry name" value="DNA_glyclase_Znf_dom_DNA_BS"/>
</dbReference>
<dbReference type="InterPro" id="IPR020629">
    <property type="entry name" value="Formamido-pyr_DNA_Glyclase"/>
</dbReference>
<dbReference type="InterPro" id="IPR012319">
    <property type="entry name" value="FPG_cat"/>
</dbReference>
<dbReference type="InterPro" id="IPR035937">
    <property type="entry name" value="MutM-like_N-ter"/>
</dbReference>
<dbReference type="InterPro" id="IPR010979">
    <property type="entry name" value="Ribosomal_uS13-like_H2TH"/>
</dbReference>
<dbReference type="InterPro" id="IPR000214">
    <property type="entry name" value="Znf_DNA_glyclase/AP_lyase"/>
</dbReference>
<dbReference type="InterPro" id="IPR010663">
    <property type="entry name" value="Znf_FPG/IleRS"/>
</dbReference>
<dbReference type="NCBIfam" id="TIGR00577">
    <property type="entry name" value="fpg"/>
    <property type="match status" value="1"/>
</dbReference>
<dbReference type="NCBIfam" id="NF002211">
    <property type="entry name" value="PRK01103.1"/>
    <property type="match status" value="1"/>
</dbReference>
<dbReference type="NCBIfam" id="NF011385">
    <property type="entry name" value="PRK14810.1"/>
    <property type="match status" value="1"/>
</dbReference>
<dbReference type="PANTHER" id="PTHR22993">
    <property type="entry name" value="FORMAMIDOPYRIMIDINE-DNA GLYCOSYLASE"/>
    <property type="match status" value="1"/>
</dbReference>
<dbReference type="PANTHER" id="PTHR22993:SF9">
    <property type="entry name" value="FORMAMIDOPYRIMIDINE-DNA GLYCOSYLASE"/>
    <property type="match status" value="1"/>
</dbReference>
<dbReference type="Pfam" id="PF01149">
    <property type="entry name" value="Fapy_DNA_glyco"/>
    <property type="match status" value="1"/>
</dbReference>
<dbReference type="Pfam" id="PF06831">
    <property type="entry name" value="H2TH"/>
    <property type="match status" value="1"/>
</dbReference>
<dbReference type="Pfam" id="PF06827">
    <property type="entry name" value="zf-FPG_IleRS"/>
    <property type="match status" value="1"/>
</dbReference>
<dbReference type="SMART" id="SM00898">
    <property type="entry name" value="Fapy_DNA_glyco"/>
    <property type="match status" value="1"/>
</dbReference>
<dbReference type="SMART" id="SM01232">
    <property type="entry name" value="H2TH"/>
    <property type="match status" value="1"/>
</dbReference>
<dbReference type="SUPFAM" id="SSF57716">
    <property type="entry name" value="Glucocorticoid receptor-like (DNA-binding domain)"/>
    <property type="match status" value="1"/>
</dbReference>
<dbReference type="SUPFAM" id="SSF81624">
    <property type="entry name" value="N-terminal domain of MutM-like DNA repair proteins"/>
    <property type="match status" value="1"/>
</dbReference>
<dbReference type="SUPFAM" id="SSF46946">
    <property type="entry name" value="S13-like H2TH domain"/>
    <property type="match status" value="1"/>
</dbReference>
<dbReference type="PROSITE" id="PS51068">
    <property type="entry name" value="FPG_CAT"/>
    <property type="match status" value="1"/>
</dbReference>
<dbReference type="PROSITE" id="PS01242">
    <property type="entry name" value="ZF_FPG_1"/>
    <property type="match status" value="1"/>
</dbReference>
<dbReference type="PROSITE" id="PS51066">
    <property type="entry name" value="ZF_FPG_2"/>
    <property type="match status" value="1"/>
</dbReference>
<keyword id="KW-0227">DNA damage</keyword>
<keyword id="KW-0234">DNA repair</keyword>
<keyword id="KW-0238">DNA-binding</keyword>
<keyword id="KW-0326">Glycosidase</keyword>
<keyword id="KW-0378">Hydrolase</keyword>
<keyword id="KW-0456">Lyase</keyword>
<keyword id="KW-0479">Metal-binding</keyword>
<keyword id="KW-0511">Multifunctional enzyme</keyword>
<keyword id="KW-0862">Zinc</keyword>
<keyword id="KW-0863">Zinc-finger</keyword>
<evidence type="ECO:0000250" key="1"/>
<evidence type="ECO:0000255" key="2">
    <source>
        <dbReference type="HAMAP-Rule" id="MF_00103"/>
    </source>
</evidence>
<name>FPG_SOLUE</name>
<comment type="function">
    <text evidence="2">Involved in base excision repair of DNA damaged by oxidation or by mutagenic agents. Acts as a DNA glycosylase that recognizes and removes damaged bases. Has a preference for oxidized purines, such as 7,8-dihydro-8-oxoguanine (8-oxoG). Has AP (apurinic/apyrimidinic) lyase activity and introduces nicks in the DNA strand. Cleaves the DNA backbone by beta-delta elimination to generate a single-strand break at the site of the removed base with both 3'- and 5'-phosphates.</text>
</comment>
<comment type="catalytic activity">
    <reaction evidence="2">
        <text>Hydrolysis of DNA containing ring-opened 7-methylguanine residues, releasing 2,6-diamino-4-hydroxy-5-(N-methyl)formamidopyrimidine.</text>
        <dbReference type="EC" id="3.2.2.23"/>
    </reaction>
</comment>
<comment type="catalytic activity">
    <reaction evidence="2">
        <text>2'-deoxyribonucleotide-(2'-deoxyribose 5'-phosphate)-2'-deoxyribonucleotide-DNA = a 3'-end 2'-deoxyribonucleotide-(2,3-dehydro-2,3-deoxyribose 5'-phosphate)-DNA + a 5'-end 5'-phospho-2'-deoxyribonucleoside-DNA + H(+)</text>
        <dbReference type="Rhea" id="RHEA:66592"/>
        <dbReference type="Rhea" id="RHEA-COMP:13180"/>
        <dbReference type="Rhea" id="RHEA-COMP:16897"/>
        <dbReference type="Rhea" id="RHEA-COMP:17067"/>
        <dbReference type="ChEBI" id="CHEBI:15378"/>
        <dbReference type="ChEBI" id="CHEBI:136412"/>
        <dbReference type="ChEBI" id="CHEBI:157695"/>
        <dbReference type="ChEBI" id="CHEBI:167181"/>
        <dbReference type="EC" id="4.2.99.18"/>
    </reaction>
</comment>
<comment type="cofactor">
    <cofactor evidence="2">
        <name>Zn(2+)</name>
        <dbReference type="ChEBI" id="CHEBI:29105"/>
    </cofactor>
    <text evidence="2">Binds 1 zinc ion per subunit.</text>
</comment>
<comment type="subunit">
    <text evidence="2">Monomer.</text>
</comment>
<comment type="similarity">
    <text evidence="2">Belongs to the FPG family.</text>
</comment>
<sequence>MPELPEVETVVRSLAPLVGRRIATAEFRNLRILRGGDPDLMSARLAGRKILSIKRYGKFIVAVIEGGGHLMIHLGMTGKLLLGGPSGKHTHAVLTFDRGTLLFDDSRQFGCIEYSEEFPKRVARLGPEPMEISFEDFAADLKRRKTRIKSLLLNQTFIRGVGNIYADEALFRAGIHPQALTSRIRIERARKLYDAIGEVLTEAIEAGGSSISDYVDAEGRSGFFQFSHRVYQRTGEPCLNCKTPIRRVIVTQRSSHFCPHCQKR</sequence>
<feature type="initiator methionine" description="Removed" evidence="1">
    <location>
        <position position="1"/>
    </location>
</feature>
<feature type="chain" id="PRO_1000008782" description="Formamidopyrimidine-DNA glycosylase">
    <location>
        <begin position="2"/>
        <end position="264"/>
    </location>
</feature>
<feature type="zinc finger region" description="FPG-type" evidence="2">
    <location>
        <begin position="229"/>
        <end position="263"/>
    </location>
</feature>
<feature type="active site" description="Schiff-base intermediate with DNA" evidence="2">
    <location>
        <position position="2"/>
    </location>
</feature>
<feature type="active site" description="Proton donor" evidence="2">
    <location>
        <position position="3"/>
    </location>
</feature>
<feature type="active site" description="Proton donor; for beta-elimination activity" evidence="2">
    <location>
        <position position="58"/>
    </location>
</feature>
<feature type="active site" description="Proton donor; for delta-elimination activity" evidence="2">
    <location>
        <position position="253"/>
    </location>
</feature>
<feature type="binding site" evidence="2">
    <location>
        <position position="89"/>
    </location>
    <ligand>
        <name>DNA</name>
        <dbReference type="ChEBI" id="CHEBI:16991"/>
    </ligand>
</feature>
<feature type="binding site" evidence="2">
    <location>
        <position position="107"/>
    </location>
    <ligand>
        <name>DNA</name>
        <dbReference type="ChEBI" id="CHEBI:16991"/>
    </ligand>
</feature>
<feature type="binding site" evidence="2">
    <location>
        <position position="144"/>
    </location>
    <ligand>
        <name>DNA</name>
        <dbReference type="ChEBI" id="CHEBI:16991"/>
    </ligand>
</feature>
<accession>Q01RU9</accession>
<proteinExistence type="inferred from homology"/>
<organism>
    <name type="scientific">Solibacter usitatus (strain Ellin6076)</name>
    <dbReference type="NCBI Taxonomy" id="234267"/>
    <lineage>
        <taxon>Bacteria</taxon>
        <taxon>Pseudomonadati</taxon>
        <taxon>Acidobacteriota</taxon>
        <taxon>Terriglobia</taxon>
        <taxon>Bryobacterales</taxon>
        <taxon>Solibacteraceae</taxon>
        <taxon>Candidatus Solibacter</taxon>
    </lineage>
</organism>
<reference key="1">
    <citation type="journal article" date="2009" name="Appl. Environ. Microbiol.">
        <title>Three genomes from the phylum Acidobacteria provide insight into the lifestyles of these microorganisms in soils.</title>
        <authorList>
            <person name="Ward N.L."/>
            <person name="Challacombe J.F."/>
            <person name="Janssen P.H."/>
            <person name="Henrissat B."/>
            <person name="Coutinho P.M."/>
            <person name="Wu M."/>
            <person name="Xie G."/>
            <person name="Haft D.H."/>
            <person name="Sait M."/>
            <person name="Badger J."/>
            <person name="Barabote R.D."/>
            <person name="Bradley B."/>
            <person name="Brettin T.S."/>
            <person name="Brinkac L.M."/>
            <person name="Bruce D."/>
            <person name="Creasy T."/>
            <person name="Daugherty S.C."/>
            <person name="Davidsen T.M."/>
            <person name="DeBoy R.T."/>
            <person name="Detter J.C."/>
            <person name="Dodson R.J."/>
            <person name="Durkin A.S."/>
            <person name="Ganapathy A."/>
            <person name="Gwinn-Giglio M."/>
            <person name="Han C.S."/>
            <person name="Khouri H."/>
            <person name="Kiss H."/>
            <person name="Kothari S.P."/>
            <person name="Madupu R."/>
            <person name="Nelson K.E."/>
            <person name="Nelson W.C."/>
            <person name="Paulsen I."/>
            <person name="Penn K."/>
            <person name="Ren Q."/>
            <person name="Rosovitz M.J."/>
            <person name="Selengut J.D."/>
            <person name="Shrivastava S."/>
            <person name="Sullivan S.A."/>
            <person name="Tapia R."/>
            <person name="Thompson L.S."/>
            <person name="Watkins K.L."/>
            <person name="Yang Q."/>
            <person name="Yu C."/>
            <person name="Zafar N."/>
            <person name="Zhou L."/>
            <person name="Kuske C.R."/>
        </authorList>
    </citation>
    <scope>NUCLEOTIDE SEQUENCE [LARGE SCALE GENOMIC DNA]</scope>
    <source>
        <strain>Ellin6076</strain>
    </source>
</reference>
<protein>
    <recommendedName>
        <fullName evidence="2">Formamidopyrimidine-DNA glycosylase</fullName>
        <shortName evidence="2">Fapy-DNA glycosylase</shortName>
        <ecNumber evidence="2">3.2.2.23</ecNumber>
    </recommendedName>
    <alternativeName>
        <fullName evidence="2">DNA-(apurinic or apyrimidinic site) lyase MutM</fullName>
        <shortName evidence="2">AP lyase MutM</shortName>
        <ecNumber evidence="2">4.2.99.18</ecNumber>
    </alternativeName>
</protein>